<reference key="1">
    <citation type="journal article" date="2006" name="BMC Biol.">
        <title>The complete plastid genome sequence of the parasitic green alga, Helicosporidium sp. is highly reduced and structured.</title>
        <authorList>
            <person name="de Koning A.P."/>
            <person name="Keeling P.J."/>
        </authorList>
    </citation>
    <scope>NUCLEOTIDE SEQUENCE [LARGE SCALE GENOMIC DNA]</scope>
</reference>
<gene>
    <name type="primary">rpl5</name>
</gene>
<comment type="function">
    <text evidence="1">Binds 5S rRNA, forms part of the central protuberance of the 50S subunit.</text>
</comment>
<comment type="subunit">
    <text evidence="1">Part of the 50S ribosomal subunit; contacts the 5S rRNA.</text>
</comment>
<comment type="subcellular location">
    <subcellularLocation>
        <location>Plastid</location>
    </subcellularLocation>
</comment>
<comment type="similarity">
    <text evidence="2">Belongs to the universal ribosomal protein uL5 family.</text>
</comment>
<protein>
    <recommendedName>
        <fullName evidence="2">Large ribosomal subunit protein uL5c</fullName>
    </recommendedName>
    <alternativeName>
        <fullName>50S ribosomal protein L5, plastid</fullName>
    </alternativeName>
</protein>
<accession>Q2EEW3</accession>
<sequence>MKNDFFNYYKTKIIPQYLKDYNKKKALEVPVIKKIVISRGIGKANTLEINNYIEESIKEFLIMTGQKPKLNRAKKHIAAFKIKKKMILGLSVTLRGAKMYAFLYKFINIILPNIRQFQGIENKQFDSLGNITFPIYSQSNIPELPYNPRVEKRGFNVTINIKAKNVSEAKALCAYLGFPII</sequence>
<evidence type="ECO:0000250" key="1"/>
<evidence type="ECO:0000305" key="2"/>
<feature type="chain" id="PRO_0000309000" description="Large ribosomal subunit protein uL5c">
    <location>
        <begin position="1"/>
        <end position="181"/>
    </location>
</feature>
<organism>
    <name type="scientific">Helicosporidium sp. subsp. Simulium jonesii</name>
    <name type="common">Green alga</name>
    <dbReference type="NCBI Taxonomy" id="145475"/>
    <lineage>
        <taxon>Eukaryota</taxon>
        <taxon>Viridiplantae</taxon>
        <taxon>Chlorophyta</taxon>
        <taxon>core chlorophytes</taxon>
        <taxon>Trebouxiophyceae</taxon>
        <taxon>Chlorellales</taxon>
        <taxon>Chlorellaceae</taxon>
        <taxon>Helicosporidium</taxon>
    </lineage>
</organism>
<geneLocation type="non-photosynthetic plastid"/>
<keyword id="KW-0934">Plastid</keyword>
<keyword id="KW-0687">Ribonucleoprotein</keyword>
<keyword id="KW-0689">Ribosomal protein</keyword>
<keyword id="KW-0694">RNA-binding</keyword>
<keyword id="KW-0699">rRNA-binding</keyword>
<name>RK5_HELSJ</name>
<proteinExistence type="inferred from homology"/>
<dbReference type="EMBL" id="DQ398104">
    <property type="protein sequence ID" value="ABD33979.1"/>
    <property type="molecule type" value="Genomic_DNA"/>
</dbReference>
<dbReference type="RefSeq" id="YP_635931.1">
    <property type="nucleotide sequence ID" value="NC_008100.1"/>
</dbReference>
<dbReference type="SMR" id="Q2EEW3"/>
<dbReference type="GeneID" id="4100425"/>
<dbReference type="GO" id="GO:0009536">
    <property type="term" value="C:plastid"/>
    <property type="evidence" value="ECO:0007669"/>
    <property type="project" value="UniProtKB-SubCell"/>
</dbReference>
<dbReference type="GO" id="GO:1990904">
    <property type="term" value="C:ribonucleoprotein complex"/>
    <property type="evidence" value="ECO:0007669"/>
    <property type="project" value="UniProtKB-KW"/>
</dbReference>
<dbReference type="GO" id="GO:0005840">
    <property type="term" value="C:ribosome"/>
    <property type="evidence" value="ECO:0007669"/>
    <property type="project" value="UniProtKB-KW"/>
</dbReference>
<dbReference type="GO" id="GO:0019843">
    <property type="term" value="F:rRNA binding"/>
    <property type="evidence" value="ECO:0007669"/>
    <property type="project" value="UniProtKB-KW"/>
</dbReference>
<dbReference type="GO" id="GO:0003735">
    <property type="term" value="F:structural constituent of ribosome"/>
    <property type="evidence" value="ECO:0007669"/>
    <property type="project" value="InterPro"/>
</dbReference>
<dbReference type="GO" id="GO:0006412">
    <property type="term" value="P:translation"/>
    <property type="evidence" value="ECO:0007669"/>
    <property type="project" value="InterPro"/>
</dbReference>
<dbReference type="Gene3D" id="3.30.1440.10">
    <property type="match status" value="1"/>
</dbReference>
<dbReference type="HAMAP" id="MF_01333_B">
    <property type="entry name" value="Ribosomal_uL5_B"/>
    <property type="match status" value="1"/>
</dbReference>
<dbReference type="InterPro" id="IPR002132">
    <property type="entry name" value="Ribosomal_uL5"/>
</dbReference>
<dbReference type="InterPro" id="IPR020930">
    <property type="entry name" value="Ribosomal_uL5_bac-type"/>
</dbReference>
<dbReference type="InterPro" id="IPR031309">
    <property type="entry name" value="Ribosomal_uL5_C"/>
</dbReference>
<dbReference type="InterPro" id="IPR022803">
    <property type="entry name" value="Ribosomal_uL5_dom_sf"/>
</dbReference>
<dbReference type="InterPro" id="IPR031310">
    <property type="entry name" value="Ribosomal_uL5_N"/>
</dbReference>
<dbReference type="PANTHER" id="PTHR11994">
    <property type="entry name" value="60S RIBOSOMAL PROTEIN L11-RELATED"/>
    <property type="match status" value="1"/>
</dbReference>
<dbReference type="Pfam" id="PF00281">
    <property type="entry name" value="Ribosomal_L5"/>
    <property type="match status" value="1"/>
</dbReference>
<dbReference type="Pfam" id="PF00673">
    <property type="entry name" value="Ribosomal_L5_C"/>
    <property type="match status" value="1"/>
</dbReference>
<dbReference type="PIRSF" id="PIRSF002161">
    <property type="entry name" value="Ribosomal_L5"/>
    <property type="match status" value="1"/>
</dbReference>
<dbReference type="SUPFAM" id="SSF55282">
    <property type="entry name" value="RL5-like"/>
    <property type="match status" value="1"/>
</dbReference>